<accession>A6ZRW3</accession>
<accession>B0KZR5</accession>
<sequence length="617" mass="70123">MKSFITRNKTAILATVAATGTAIGAYYYYNQLQQQQQRGKKNTINKDEKKDTKDSQKETEGAKKSTAPSNPPIYPVSSNGEPDFSNKANFTAEEKDKYALALKDKGNQFFRNKKYDDAIKYYNWALELKEDPVFYSNLSACYVSVGDLKKVVEMSTKALELKPDYSKVLLRRASANEGLGKFADAMFDLSVLSLNGDFNDASIEPMLERNLNKQAMSKLKEKFGDIDTATATPTELSTQPAKERKDKQENLPSVTSMASFFGIFKPELTFANYDESNEADKELMNGLSNLYKRSPESYDKADESFTKAARLFEEQLDKNNEDEKLKEKLAISLEHTGIFKFLKNDPLGAHEDIKKAIELFPRVNSYIYMALIMADRNDSTEYYNYFDKALKLDSNNSSVYYHRGQMNFILQNYDQAGKDFDKAKELDPENIFPYIQLACLAYRENKFDDCETLFSEAKRKFPEAPEVPNFFAEILTDKNDFDKALKQYDLAIELENKLDGIYVGIAPLVGKATLLTRNPTVENFIEATNLLEKASKLDPRSEQAKIGLAQMKLQQEDIDEAITLFEESADLARTMEEKLQAITFAEAAKVQQRIRSDPVLAKKIQETLAKLREQGLM</sequence>
<dbReference type="EMBL" id="EF125227">
    <property type="protein sequence ID" value="ABN58636.1"/>
    <property type="molecule type" value="Genomic_DNA"/>
</dbReference>
<dbReference type="EMBL" id="AAFW02000067">
    <property type="protein sequence ID" value="EDN62695.1"/>
    <property type="molecule type" value="Genomic_DNA"/>
</dbReference>
<dbReference type="SMR" id="A6ZRW3"/>
<dbReference type="HOGENOM" id="CLU_017516_1_0_1"/>
<dbReference type="Proteomes" id="UP000007060">
    <property type="component" value="Unassembled WGS sequence"/>
</dbReference>
<dbReference type="GO" id="GO:0005741">
    <property type="term" value="C:mitochondrial outer membrane"/>
    <property type="evidence" value="ECO:0007669"/>
    <property type="project" value="UniProtKB-SubCell"/>
</dbReference>
<dbReference type="GO" id="GO:0030943">
    <property type="term" value="F:mitochondrion targeting sequence binding"/>
    <property type="evidence" value="ECO:0007669"/>
    <property type="project" value="TreeGrafter"/>
</dbReference>
<dbReference type="GO" id="GO:0015450">
    <property type="term" value="F:protein-transporting ATPase activity"/>
    <property type="evidence" value="ECO:0007669"/>
    <property type="project" value="InterPro"/>
</dbReference>
<dbReference type="GO" id="GO:0030150">
    <property type="term" value="P:protein import into mitochondrial matrix"/>
    <property type="evidence" value="ECO:0007669"/>
    <property type="project" value="TreeGrafter"/>
</dbReference>
<dbReference type="GO" id="GO:0045039">
    <property type="term" value="P:protein insertion into mitochondrial inner membrane"/>
    <property type="evidence" value="ECO:0007669"/>
    <property type="project" value="TreeGrafter"/>
</dbReference>
<dbReference type="FunFam" id="1.25.40.10:FF:000357">
    <property type="entry name" value="Mitochondrial proteins import receptor"/>
    <property type="match status" value="1"/>
</dbReference>
<dbReference type="FunFam" id="1.25.40.10:FF:000374">
    <property type="entry name" value="Mitochondrial proteins import receptor"/>
    <property type="match status" value="1"/>
</dbReference>
<dbReference type="Gene3D" id="1.25.40.10">
    <property type="entry name" value="Tetratricopeptide repeat domain"/>
    <property type="match status" value="2"/>
</dbReference>
<dbReference type="InterPro" id="IPR005687">
    <property type="entry name" value="Tom70"/>
</dbReference>
<dbReference type="InterPro" id="IPR011990">
    <property type="entry name" value="TPR-like_helical_dom_sf"/>
</dbReference>
<dbReference type="InterPro" id="IPR019734">
    <property type="entry name" value="TPR_rpt"/>
</dbReference>
<dbReference type="NCBIfam" id="TIGR00990">
    <property type="entry name" value="3a0801s09"/>
    <property type="match status" value="1"/>
</dbReference>
<dbReference type="PANTHER" id="PTHR46208">
    <property type="entry name" value="MITOCHONDRIAL IMPORT RECEPTOR SUBUNIT TOM70"/>
    <property type="match status" value="1"/>
</dbReference>
<dbReference type="PANTHER" id="PTHR46208:SF1">
    <property type="entry name" value="MITOCHONDRIAL IMPORT RECEPTOR SUBUNIT TOM70"/>
    <property type="match status" value="1"/>
</dbReference>
<dbReference type="Pfam" id="PF00515">
    <property type="entry name" value="TPR_1"/>
    <property type="match status" value="1"/>
</dbReference>
<dbReference type="Pfam" id="PF13432">
    <property type="entry name" value="TPR_16"/>
    <property type="match status" value="1"/>
</dbReference>
<dbReference type="Pfam" id="PF14559">
    <property type="entry name" value="TPR_19"/>
    <property type="match status" value="1"/>
</dbReference>
<dbReference type="Pfam" id="PF13181">
    <property type="entry name" value="TPR_8"/>
    <property type="match status" value="1"/>
</dbReference>
<dbReference type="SMART" id="SM00028">
    <property type="entry name" value="TPR"/>
    <property type="match status" value="8"/>
</dbReference>
<dbReference type="SUPFAM" id="SSF48452">
    <property type="entry name" value="TPR-like"/>
    <property type="match status" value="2"/>
</dbReference>
<dbReference type="PROSITE" id="PS50005">
    <property type="entry name" value="TPR"/>
    <property type="match status" value="6"/>
</dbReference>
<dbReference type="PROSITE" id="PS50293">
    <property type="entry name" value="TPR_REGION"/>
    <property type="match status" value="2"/>
</dbReference>
<comment type="function">
    <text evidence="1">Component of the TOM (translocase of outer membrane) receptor complex responsible for the recognition and translocation of cytosolically synthesized mitochondrial preproteins. Together with TOM20 and TOM22 functions as the transit peptide receptor at the surface of the mitochondrion outer membrane and facilitates the movement of preproteins into the TOM40 translocation pore (By similarity).</text>
</comment>
<comment type="subunit">
    <text evidence="1">Forms part of the TOM (translocase of outer membrane) complex that consists of at least 7 different proteins (TOM5, TOM6, TOM7, TOM20, TOM22, TOM40 and TOM70). In the complex interacts with TOM22. Interacts with TOM37.</text>
</comment>
<comment type="subcellular location">
    <subcellularLocation>
        <location evidence="1">Mitochondrion outer membrane</location>
        <topology evidence="1">Single-pass membrane protein</topology>
    </subcellularLocation>
</comment>
<comment type="similarity">
    <text evidence="5">Belongs to the Tom70 family.</text>
</comment>
<feature type="chain" id="PRO_0000378319" description="Mitochondrial import receptor subunit TOM70">
    <location>
        <begin position="1"/>
        <end position="617"/>
    </location>
</feature>
<feature type="topological domain" description="Mitochondrial intermembrane" evidence="3">
    <location>
        <begin position="1"/>
        <end position="10"/>
    </location>
</feature>
<feature type="transmembrane region" description="Helical" evidence="3">
    <location>
        <begin position="11"/>
        <end position="30"/>
    </location>
</feature>
<feature type="topological domain" description="Cytoplasmic" evidence="3">
    <location>
        <begin position="31"/>
        <end position="617"/>
    </location>
</feature>
<feature type="repeat" description="TPR 1">
    <location>
        <begin position="99"/>
        <end position="132"/>
    </location>
</feature>
<feature type="repeat" description="TPR 2">
    <location>
        <begin position="134"/>
        <end position="165"/>
    </location>
</feature>
<feature type="repeat" description="TPR 3">
    <location>
        <begin position="281"/>
        <end position="315"/>
    </location>
</feature>
<feature type="repeat" description="TPR 4">
    <location>
        <begin position="363"/>
        <end position="396"/>
    </location>
</feature>
<feature type="repeat" description="TPR 5">
    <location>
        <begin position="397"/>
        <end position="430"/>
    </location>
</feature>
<feature type="repeat" description="TPR 6">
    <location>
        <begin position="432"/>
        <end position="464"/>
    </location>
</feature>
<feature type="repeat" description="TPR 7">
    <location>
        <begin position="465"/>
        <end position="498"/>
    </location>
</feature>
<feature type="repeat" description="TPR 8">
    <location>
        <begin position="505"/>
        <end position="541"/>
    </location>
</feature>
<feature type="repeat" description="TPR 9">
    <location>
        <begin position="542"/>
        <end position="575"/>
    </location>
</feature>
<feature type="region of interest" description="Disordered" evidence="4">
    <location>
        <begin position="36"/>
        <end position="87"/>
    </location>
</feature>
<feature type="region of interest" description="Disordered" evidence="4">
    <location>
        <begin position="228"/>
        <end position="251"/>
    </location>
</feature>
<feature type="compositionally biased region" description="Basic and acidic residues" evidence="4">
    <location>
        <begin position="44"/>
        <end position="63"/>
    </location>
</feature>
<feature type="compositionally biased region" description="Polar residues" evidence="4">
    <location>
        <begin position="229"/>
        <end position="240"/>
    </location>
</feature>
<feature type="modified residue" description="Phosphoserine" evidence="2">
    <location>
        <position position="174"/>
    </location>
</feature>
<organism>
    <name type="scientific">Saccharomyces cerevisiae (strain YJM789)</name>
    <name type="common">Baker's yeast</name>
    <dbReference type="NCBI Taxonomy" id="307796"/>
    <lineage>
        <taxon>Eukaryota</taxon>
        <taxon>Fungi</taxon>
        <taxon>Dikarya</taxon>
        <taxon>Ascomycota</taxon>
        <taxon>Saccharomycotina</taxon>
        <taxon>Saccharomycetes</taxon>
        <taxon>Saccharomycetales</taxon>
        <taxon>Saccharomycetaceae</taxon>
        <taxon>Saccharomyces</taxon>
    </lineage>
</organism>
<keyword id="KW-0472">Membrane</keyword>
<keyword id="KW-0496">Mitochondrion</keyword>
<keyword id="KW-1000">Mitochondrion outer membrane</keyword>
<keyword id="KW-0597">Phosphoprotein</keyword>
<keyword id="KW-0677">Repeat</keyword>
<keyword id="KW-0802">TPR repeat</keyword>
<keyword id="KW-0812">Transmembrane</keyword>
<keyword id="KW-1133">Transmembrane helix</keyword>
<name>TOM70_YEAS7</name>
<reference key="1">
    <citation type="journal article" date="2008" name="Genetics">
        <title>Sequential elimination of major-effect contributors identifies additional quantitative trait loci conditioning high-temperature growth in yeast.</title>
        <authorList>
            <person name="Sinha H."/>
            <person name="David L."/>
            <person name="Pascon R.C."/>
            <person name="Clauder-Muenster S."/>
            <person name="Krishnakumar S."/>
            <person name="Nguyen M."/>
            <person name="Shi G."/>
            <person name="Dean J."/>
            <person name="Davis R.W."/>
            <person name="Oefner P.J."/>
            <person name="McCusker J.H."/>
            <person name="Steinmetz L.M."/>
        </authorList>
    </citation>
    <scope>NUCLEOTIDE SEQUENCE [GENOMIC DNA]</scope>
</reference>
<reference key="2">
    <citation type="journal article" date="2007" name="Proc. Natl. Acad. Sci. U.S.A.">
        <title>Genome sequencing and comparative analysis of Saccharomyces cerevisiae strain YJM789.</title>
        <authorList>
            <person name="Wei W."/>
            <person name="McCusker J.H."/>
            <person name="Hyman R.W."/>
            <person name="Jones T."/>
            <person name="Ning Y."/>
            <person name="Cao Z."/>
            <person name="Gu Z."/>
            <person name="Bruno D."/>
            <person name="Miranda M."/>
            <person name="Nguyen M."/>
            <person name="Wilhelmy J."/>
            <person name="Komp C."/>
            <person name="Tamse R."/>
            <person name="Wang X."/>
            <person name="Jia P."/>
            <person name="Luedi P."/>
            <person name="Oefner P.J."/>
            <person name="David L."/>
            <person name="Dietrich F.S."/>
            <person name="Li Y."/>
            <person name="Davis R.W."/>
            <person name="Steinmetz L.M."/>
        </authorList>
    </citation>
    <scope>NUCLEOTIDE SEQUENCE [LARGE SCALE GENOMIC DNA]</scope>
    <source>
        <strain>YJM789</strain>
    </source>
</reference>
<gene>
    <name type="primary">TOM70</name>
    <name type="synonym">MAS70</name>
    <name type="synonym">OMP1</name>
    <name type="ORF">SCY_4674</name>
</gene>
<evidence type="ECO:0000250" key="1"/>
<evidence type="ECO:0000250" key="2">
    <source>
        <dbReference type="UniProtKB" id="P07213"/>
    </source>
</evidence>
<evidence type="ECO:0000255" key="3"/>
<evidence type="ECO:0000256" key="4">
    <source>
        <dbReference type="SAM" id="MobiDB-lite"/>
    </source>
</evidence>
<evidence type="ECO:0000305" key="5"/>
<proteinExistence type="inferred from homology"/>
<protein>
    <recommendedName>
        <fullName>Mitochondrial import receptor subunit TOM70</fullName>
    </recommendedName>
    <alternativeName>
        <fullName>70 kDa mitochondrial outer membrane protein</fullName>
    </alternativeName>
    <alternativeName>
        <fullName>Translocase of outer membrane 70 kDa subunit</fullName>
    </alternativeName>
</protein>